<evidence type="ECO:0000250" key="1"/>
<evidence type="ECO:0000250" key="2">
    <source>
        <dbReference type="UniProtKB" id="Q99LP6"/>
    </source>
</evidence>
<evidence type="ECO:0000250" key="3">
    <source>
        <dbReference type="UniProtKB" id="Q9HAV7"/>
    </source>
</evidence>
<evidence type="ECO:0000269" key="4">
    <source>
    </source>
</evidence>
<evidence type="ECO:0000305" key="5"/>
<comment type="function">
    <text evidence="1">Essential component of the PAM complex, a complex required for the translocation of transit peptide-containing proteins from the inner membrane into the mitochondrial matrix in an ATP-dependent manner. Seems to control the nucleotide-dependent binding of mitochondrial HSP70 to substrate proteins (By similarity).</text>
</comment>
<comment type="subunit">
    <text evidence="1">Probable component of the PAM complex at least composed of a mitochondrial HSP70 protein, GRPEL1 or GRPEL2, TIMM44, TIMM16/PAM16 and TIMM14/DNAJC19. Binds to HSP70, HSC70 and HSJ1B (By similarity).</text>
</comment>
<comment type="subcellular location">
    <subcellularLocation>
        <location>Mitochondrion matrix</location>
    </subcellularLocation>
</comment>
<comment type="similarity">
    <text evidence="5">Belongs to the GrpE family.</text>
</comment>
<dbReference type="EMBL" id="BC102964">
    <property type="protein sequence ID" value="AAI02965.1"/>
    <property type="molecule type" value="mRNA"/>
</dbReference>
<dbReference type="RefSeq" id="NP_001029673.1">
    <property type="nucleotide sequence ID" value="NM_001034501.2"/>
</dbReference>
<dbReference type="SMR" id="Q3SZC1"/>
<dbReference type="FunCoup" id="Q3SZC1">
    <property type="interactions" value="2834"/>
</dbReference>
<dbReference type="STRING" id="9913.ENSBTAP00000013431"/>
<dbReference type="PaxDb" id="9913-ENSBTAP00000013431"/>
<dbReference type="PeptideAtlas" id="Q3SZC1"/>
<dbReference type="Ensembl" id="ENSBTAT00000013431.4">
    <property type="protein sequence ID" value="ENSBTAP00000013431.3"/>
    <property type="gene ID" value="ENSBTAG00000010181.5"/>
</dbReference>
<dbReference type="GeneID" id="515580"/>
<dbReference type="KEGG" id="bta:515580"/>
<dbReference type="CTD" id="80273"/>
<dbReference type="VEuPathDB" id="HostDB:ENSBTAG00000010181"/>
<dbReference type="VGNC" id="VGNC:29665">
    <property type="gene designation" value="GRPEL1"/>
</dbReference>
<dbReference type="eggNOG" id="KOG3003">
    <property type="taxonomic scope" value="Eukaryota"/>
</dbReference>
<dbReference type="GeneTree" id="ENSGT00390000005589"/>
<dbReference type="HOGENOM" id="CLU_057217_0_1_1"/>
<dbReference type="InParanoid" id="Q3SZC1"/>
<dbReference type="OMA" id="PHRHQAI"/>
<dbReference type="OrthoDB" id="201635at2759"/>
<dbReference type="TreeFam" id="TF105284"/>
<dbReference type="Proteomes" id="UP000009136">
    <property type="component" value="Chromosome 6"/>
</dbReference>
<dbReference type="Bgee" id="ENSBTAG00000010181">
    <property type="expression patterns" value="Expressed in oocyte and 105 other cell types or tissues"/>
</dbReference>
<dbReference type="GO" id="GO:0005654">
    <property type="term" value="C:nucleoplasm"/>
    <property type="evidence" value="ECO:0007669"/>
    <property type="project" value="Ensembl"/>
</dbReference>
<dbReference type="GO" id="GO:0001405">
    <property type="term" value="C:PAM complex, Tim23 associated import motor"/>
    <property type="evidence" value="ECO:0000318"/>
    <property type="project" value="GO_Central"/>
</dbReference>
<dbReference type="GO" id="GO:0000774">
    <property type="term" value="F:adenyl-nucleotide exchange factor activity"/>
    <property type="evidence" value="ECO:0000318"/>
    <property type="project" value="GO_Central"/>
</dbReference>
<dbReference type="GO" id="GO:0042803">
    <property type="term" value="F:protein homodimerization activity"/>
    <property type="evidence" value="ECO:0007669"/>
    <property type="project" value="InterPro"/>
</dbReference>
<dbReference type="GO" id="GO:0051087">
    <property type="term" value="F:protein-folding chaperone binding"/>
    <property type="evidence" value="ECO:0007669"/>
    <property type="project" value="InterPro"/>
</dbReference>
<dbReference type="GO" id="GO:0051082">
    <property type="term" value="F:unfolded protein binding"/>
    <property type="evidence" value="ECO:0000318"/>
    <property type="project" value="GO_Central"/>
</dbReference>
<dbReference type="GO" id="GO:0006457">
    <property type="term" value="P:protein folding"/>
    <property type="evidence" value="ECO:0007669"/>
    <property type="project" value="InterPro"/>
</dbReference>
<dbReference type="GO" id="GO:0030150">
    <property type="term" value="P:protein import into mitochondrial matrix"/>
    <property type="evidence" value="ECO:0000318"/>
    <property type="project" value="GO_Central"/>
</dbReference>
<dbReference type="CDD" id="cd00446">
    <property type="entry name" value="GrpE"/>
    <property type="match status" value="1"/>
</dbReference>
<dbReference type="FunFam" id="2.30.22.10:FF:000002">
    <property type="entry name" value="GrpE protein homolog"/>
    <property type="match status" value="1"/>
</dbReference>
<dbReference type="FunFam" id="3.90.20.20:FF:000003">
    <property type="entry name" value="GrpE protein homolog"/>
    <property type="match status" value="1"/>
</dbReference>
<dbReference type="Gene3D" id="3.90.20.20">
    <property type="match status" value="1"/>
</dbReference>
<dbReference type="Gene3D" id="2.30.22.10">
    <property type="entry name" value="Head domain of nucleotide exchange factor GrpE"/>
    <property type="match status" value="1"/>
</dbReference>
<dbReference type="HAMAP" id="MF_01151">
    <property type="entry name" value="GrpE"/>
    <property type="match status" value="1"/>
</dbReference>
<dbReference type="InterPro" id="IPR000740">
    <property type="entry name" value="GrpE"/>
</dbReference>
<dbReference type="InterPro" id="IPR013805">
    <property type="entry name" value="GrpE_coiled_coil"/>
</dbReference>
<dbReference type="InterPro" id="IPR009012">
    <property type="entry name" value="GrpE_head"/>
</dbReference>
<dbReference type="PANTHER" id="PTHR21237">
    <property type="entry name" value="GRPE PROTEIN"/>
    <property type="match status" value="1"/>
</dbReference>
<dbReference type="PANTHER" id="PTHR21237:SF25">
    <property type="entry name" value="GRPE PROTEIN HOMOLOG 1, MITOCHONDRIAL"/>
    <property type="match status" value="1"/>
</dbReference>
<dbReference type="Pfam" id="PF01025">
    <property type="entry name" value="GrpE"/>
    <property type="match status" value="1"/>
</dbReference>
<dbReference type="PRINTS" id="PR00773">
    <property type="entry name" value="GRPEPROTEIN"/>
</dbReference>
<dbReference type="SUPFAM" id="SSF58014">
    <property type="entry name" value="Coiled-coil domain of nucleotide exchange factor GrpE"/>
    <property type="match status" value="1"/>
</dbReference>
<dbReference type="SUPFAM" id="SSF51064">
    <property type="entry name" value="Head domain of nucleotide exchange factor GrpE"/>
    <property type="match status" value="1"/>
</dbReference>
<dbReference type="PROSITE" id="PS01071">
    <property type="entry name" value="GRPE"/>
    <property type="match status" value="1"/>
</dbReference>
<reference key="1">
    <citation type="submission" date="2005-08" db="EMBL/GenBank/DDBJ databases">
        <authorList>
            <consortium name="NIH - Mammalian Gene Collection (MGC) project"/>
        </authorList>
    </citation>
    <scope>NUCLEOTIDE SEQUENCE [LARGE SCALE MRNA]</scope>
    <source>
        <strain>Crossbred X Angus</strain>
        <tissue>Ileum</tissue>
    </source>
</reference>
<reference key="2">
    <citation type="journal article" date="1995" name="Biochim. Biophys. Acta">
        <title>Affinity-purification and identification of GrpE homologues from mammalian mitochondria.</title>
        <authorList>
            <person name="Naylor D.J."/>
            <person name="Ryan M.T."/>
            <person name="Condron R."/>
            <person name="Hoogenraad N.J."/>
            <person name="Hoj P.B."/>
        </authorList>
    </citation>
    <scope>PROTEIN SEQUENCE OF 28-55 AND 170-196</scope>
    <source>
        <tissue>Liver</tissue>
    </source>
</reference>
<protein>
    <recommendedName>
        <fullName>GrpE protein homolog 1, mitochondrial</fullName>
    </recommendedName>
    <alternativeName>
        <fullName>Mt-GrpE#1</fullName>
        <shortName>mt-GrpE</shortName>
    </alternativeName>
</protein>
<gene>
    <name type="primary">GRPEL1</name>
</gene>
<name>GRPE1_BOVIN</name>
<sequence length="217" mass="24306">MAARCVRLARGSLPAFALSLRSSPRLLCTAAKQKNNGQNLEEDAGQNEQKTDLPSTEKTLMEEKVKLEEQLKETMEKYKRALADTENLRQRSQKLVEEAKLYGIQGFCKDLLEVADILEKATQCVPQEEIRDDNPHLKSLYEGLVMTEVQIQKVFTKHGLLRLNPLGAKFDPYEHEALFHTPVEGKEPGTVALVNKVGYKLHGRTLRPALVGVVKGA</sequence>
<feature type="transit peptide" description="Mitochondrion" evidence="4">
    <location>
        <begin position="1"/>
        <end position="27"/>
    </location>
</feature>
<feature type="chain" id="PRO_0000245345" description="GrpE protein homolog 1, mitochondrial">
    <location>
        <begin position="28"/>
        <end position="217"/>
    </location>
</feature>
<feature type="modified residue" description="N6-acetyllysine; alternate" evidence="2">
    <location>
        <position position="94"/>
    </location>
</feature>
<feature type="modified residue" description="N6-succinyllysine; alternate" evidence="2">
    <location>
        <position position="94"/>
    </location>
</feature>
<feature type="modified residue" description="N6-acetyllysine" evidence="2">
    <location>
        <position position="100"/>
    </location>
</feature>
<feature type="modified residue" description="N6-succinyllysine" evidence="2">
    <location>
        <position position="120"/>
    </location>
</feature>
<feature type="modified residue" description="N6-acetyllysine; alternate" evidence="3">
    <location>
        <position position="215"/>
    </location>
</feature>
<feature type="modified residue" description="N6-succinyllysine; alternate" evidence="2">
    <location>
        <position position="215"/>
    </location>
</feature>
<feature type="sequence conflict" description="In Ref. 2; AA sequence." evidence="5" ref="2">
    <original>C</original>
    <variation>S</variation>
    <location>
        <position position="28"/>
    </location>
</feature>
<feature type="sequence conflict" description="In Ref. 2; AA sequence." evidence="5" ref="2">
    <original>N</original>
    <variation>D</variation>
    <location>
        <position position="36"/>
    </location>
</feature>
<accession>Q3SZC1</accession>
<accession>Q9T2U7</accession>
<keyword id="KW-0007">Acetylation</keyword>
<keyword id="KW-0143">Chaperone</keyword>
<keyword id="KW-0903">Direct protein sequencing</keyword>
<keyword id="KW-0496">Mitochondrion</keyword>
<keyword id="KW-1185">Reference proteome</keyword>
<keyword id="KW-0809">Transit peptide</keyword>
<organism>
    <name type="scientific">Bos taurus</name>
    <name type="common">Bovine</name>
    <dbReference type="NCBI Taxonomy" id="9913"/>
    <lineage>
        <taxon>Eukaryota</taxon>
        <taxon>Metazoa</taxon>
        <taxon>Chordata</taxon>
        <taxon>Craniata</taxon>
        <taxon>Vertebrata</taxon>
        <taxon>Euteleostomi</taxon>
        <taxon>Mammalia</taxon>
        <taxon>Eutheria</taxon>
        <taxon>Laurasiatheria</taxon>
        <taxon>Artiodactyla</taxon>
        <taxon>Ruminantia</taxon>
        <taxon>Pecora</taxon>
        <taxon>Bovidae</taxon>
        <taxon>Bovinae</taxon>
        <taxon>Bos</taxon>
    </lineage>
</organism>
<proteinExistence type="evidence at protein level"/>